<reference key="1">
    <citation type="journal article" date="2006" name="J. Bacteriol.">
        <title>Chromosome rearrangement and diversification of Francisella tularensis revealed by the type B (OSU18) genome sequence.</title>
        <authorList>
            <person name="Petrosino J.F."/>
            <person name="Xiang Q."/>
            <person name="Karpathy S.E."/>
            <person name="Jiang H."/>
            <person name="Yerrapragada S."/>
            <person name="Liu Y."/>
            <person name="Gioia J."/>
            <person name="Hemphill L."/>
            <person name="Gonzalez A."/>
            <person name="Raghavan T.M."/>
            <person name="Uzman A."/>
            <person name="Fox G.E."/>
            <person name="Highlander S."/>
            <person name="Reichard M."/>
            <person name="Morton R.J."/>
            <person name="Clinkenbeard K.D."/>
            <person name="Weinstock G.M."/>
        </authorList>
    </citation>
    <scope>NUCLEOTIDE SEQUENCE [LARGE SCALE GENOMIC DNA]</scope>
    <source>
        <strain>OSU18</strain>
    </source>
</reference>
<evidence type="ECO:0000255" key="1">
    <source>
        <dbReference type="HAMAP-Rule" id="MF_00671"/>
    </source>
</evidence>
<accession>Q0BNJ4</accession>
<name>TOLB_FRATO</name>
<proteinExistence type="inferred from homology"/>
<dbReference type="EMBL" id="CP000437">
    <property type="protein sequence ID" value="ABI82340.1"/>
    <property type="molecule type" value="Genomic_DNA"/>
</dbReference>
<dbReference type="RefSeq" id="WP_004336796.1">
    <property type="nucleotide sequence ID" value="NC_017463.1"/>
</dbReference>
<dbReference type="SMR" id="Q0BNJ4"/>
<dbReference type="KEGG" id="fth:FTH_0332"/>
<dbReference type="GO" id="GO:0042597">
    <property type="term" value="C:periplasmic space"/>
    <property type="evidence" value="ECO:0007669"/>
    <property type="project" value="UniProtKB-SubCell"/>
</dbReference>
<dbReference type="GO" id="GO:0051301">
    <property type="term" value="P:cell division"/>
    <property type="evidence" value="ECO:0007669"/>
    <property type="project" value="UniProtKB-UniRule"/>
</dbReference>
<dbReference type="GO" id="GO:0017038">
    <property type="term" value="P:protein import"/>
    <property type="evidence" value="ECO:0007669"/>
    <property type="project" value="InterPro"/>
</dbReference>
<dbReference type="Gene3D" id="2.120.10.30">
    <property type="entry name" value="TolB, C-terminal domain"/>
    <property type="match status" value="1"/>
</dbReference>
<dbReference type="Gene3D" id="3.40.50.10070">
    <property type="entry name" value="TolB, N-terminal domain"/>
    <property type="match status" value="1"/>
</dbReference>
<dbReference type="HAMAP" id="MF_00671">
    <property type="entry name" value="TolB"/>
    <property type="match status" value="1"/>
</dbReference>
<dbReference type="InterPro" id="IPR011042">
    <property type="entry name" value="6-blade_b-propeller_TolB-like"/>
</dbReference>
<dbReference type="InterPro" id="IPR011659">
    <property type="entry name" value="PD40"/>
</dbReference>
<dbReference type="InterPro" id="IPR014167">
    <property type="entry name" value="Tol-Pal_TolB"/>
</dbReference>
<dbReference type="PANTHER" id="PTHR36842:SF1">
    <property type="entry name" value="PROTEIN TOLB"/>
    <property type="match status" value="1"/>
</dbReference>
<dbReference type="PANTHER" id="PTHR36842">
    <property type="entry name" value="PROTEIN TOLB HOMOLOG"/>
    <property type="match status" value="1"/>
</dbReference>
<dbReference type="Pfam" id="PF07676">
    <property type="entry name" value="PD40"/>
    <property type="match status" value="3"/>
</dbReference>
<dbReference type="SUPFAM" id="SSF52964">
    <property type="entry name" value="TolB, N-terminal domain"/>
    <property type="match status" value="1"/>
</dbReference>
<dbReference type="SUPFAM" id="SSF69304">
    <property type="entry name" value="Tricorn protease N-terminal domain"/>
    <property type="match status" value="1"/>
</dbReference>
<sequence>MRKIIAGVFIFVFLISNLYADLVAEVTTGVIQKPLVTVVSDNVVDQFPQQVNSVMVADLNHNAKLQANDTIKYEIKQKQNIPWKSLKSDYVVLTKYTNNSYNNYTVEVQILKRNDTSYLQAITYKNINVSLMRTLAHKISNYVYQKLTGNQGFFLTKLAYVKVSNLYARYGRLYELIISDYDGYNKHVVLRQTDNPIATPSWSNDGRYIVYSSYSGGSMGVYTLEIATGKVTRITNYKGINSSPSFSPDGKEIALALSKGYSDQTNIYIMNLATKALKRITINGINTAPKFSPNGQSIVFTSDREGRPNIYVASVNSKYPQSSILSTKIHQAYEPNYTPDGKNIVFMNQSSRTSGTQIADFNLVNGSVTNITNGKADSSPTVSPYGDMVAYISTNTRGYSSLDMVSLDGDNHFNIETADNGNILIQSPSWSPKNF</sequence>
<organism>
    <name type="scientific">Francisella tularensis subsp. holarctica (strain OSU18)</name>
    <dbReference type="NCBI Taxonomy" id="393011"/>
    <lineage>
        <taxon>Bacteria</taxon>
        <taxon>Pseudomonadati</taxon>
        <taxon>Pseudomonadota</taxon>
        <taxon>Gammaproteobacteria</taxon>
        <taxon>Thiotrichales</taxon>
        <taxon>Francisellaceae</taxon>
        <taxon>Francisella</taxon>
    </lineage>
</organism>
<feature type="signal peptide" evidence="1">
    <location>
        <begin position="1"/>
        <end position="20"/>
    </location>
</feature>
<feature type="chain" id="PRO_1000026701" description="Tol-Pal system protein TolB" evidence="1">
    <location>
        <begin position="21"/>
        <end position="435"/>
    </location>
</feature>
<keyword id="KW-0131">Cell cycle</keyword>
<keyword id="KW-0132">Cell division</keyword>
<keyword id="KW-0574">Periplasm</keyword>
<keyword id="KW-0732">Signal</keyword>
<comment type="function">
    <text evidence="1">Part of the Tol-Pal system, which plays a role in outer membrane invagination during cell division and is important for maintaining outer membrane integrity.</text>
</comment>
<comment type="subunit">
    <text evidence="1">The Tol-Pal system is composed of five core proteins: the inner membrane proteins TolA, TolQ and TolR, the periplasmic protein TolB and the outer membrane protein Pal. They form a network linking the inner and outer membranes and the peptidoglycan layer.</text>
</comment>
<comment type="subcellular location">
    <subcellularLocation>
        <location evidence="1">Periplasm</location>
    </subcellularLocation>
</comment>
<comment type="similarity">
    <text evidence="1">Belongs to the TolB family.</text>
</comment>
<gene>
    <name evidence="1" type="primary">tolB</name>
    <name type="ordered locus">FTH_0332</name>
</gene>
<protein>
    <recommendedName>
        <fullName evidence="1">Tol-Pal system protein TolB</fullName>
    </recommendedName>
</protein>